<proteinExistence type="inferred from homology"/>
<dbReference type="EMBL" id="BA000030">
    <property type="protein sequence ID" value="BAC73272.1"/>
    <property type="molecule type" value="Genomic_DNA"/>
</dbReference>
<dbReference type="RefSeq" id="WP_010986962.1">
    <property type="nucleotide sequence ID" value="NZ_JZJK01000066.1"/>
</dbReference>
<dbReference type="SMR" id="Q82BZ4"/>
<dbReference type="GeneID" id="41542649"/>
<dbReference type="KEGG" id="sma:SAVERM_5560"/>
<dbReference type="eggNOG" id="COG0268">
    <property type="taxonomic scope" value="Bacteria"/>
</dbReference>
<dbReference type="HOGENOM" id="CLU_160655_0_1_11"/>
<dbReference type="OrthoDB" id="9807974at2"/>
<dbReference type="Proteomes" id="UP000000428">
    <property type="component" value="Chromosome"/>
</dbReference>
<dbReference type="GO" id="GO:0005829">
    <property type="term" value="C:cytosol"/>
    <property type="evidence" value="ECO:0007669"/>
    <property type="project" value="TreeGrafter"/>
</dbReference>
<dbReference type="GO" id="GO:0015935">
    <property type="term" value="C:small ribosomal subunit"/>
    <property type="evidence" value="ECO:0007669"/>
    <property type="project" value="TreeGrafter"/>
</dbReference>
<dbReference type="GO" id="GO:0070181">
    <property type="term" value="F:small ribosomal subunit rRNA binding"/>
    <property type="evidence" value="ECO:0007669"/>
    <property type="project" value="TreeGrafter"/>
</dbReference>
<dbReference type="GO" id="GO:0003735">
    <property type="term" value="F:structural constituent of ribosome"/>
    <property type="evidence" value="ECO:0007669"/>
    <property type="project" value="InterPro"/>
</dbReference>
<dbReference type="GO" id="GO:0006412">
    <property type="term" value="P:translation"/>
    <property type="evidence" value="ECO:0007669"/>
    <property type="project" value="UniProtKB-UniRule"/>
</dbReference>
<dbReference type="FunFam" id="1.20.58.110:FF:000001">
    <property type="entry name" value="30S ribosomal protein S20"/>
    <property type="match status" value="1"/>
</dbReference>
<dbReference type="Gene3D" id="1.20.58.110">
    <property type="entry name" value="Ribosomal protein S20"/>
    <property type="match status" value="1"/>
</dbReference>
<dbReference type="HAMAP" id="MF_00500">
    <property type="entry name" value="Ribosomal_bS20"/>
    <property type="match status" value="1"/>
</dbReference>
<dbReference type="InterPro" id="IPR002583">
    <property type="entry name" value="Ribosomal_bS20"/>
</dbReference>
<dbReference type="InterPro" id="IPR036510">
    <property type="entry name" value="Ribosomal_bS20_sf"/>
</dbReference>
<dbReference type="NCBIfam" id="TIGR00029">
    <property type="entry name" value="S20"/>
    <property type="match status" value="1"/>
</dbReference>
<dbReference type="PANTHER" id="PTHR33398">
    <property type="entry name" value="30S RIBOSOMAL PROTEIN S20"/>
    <property type="match status" value="1"/>
</dbReference>
<dbReference type="PANTHER" id="PTHR33398:SF1">
    <property type="entry name" value="SMALL RIBOSOMAL SUBUNIT PROTEIN BS20C"/>
    <property type="match status" value="1"/>
</dbReference>
<dbReference type="Pfam" id="PF01649">
    <property type="entry name" value="Ribosomal_S20p"/>
    <property type="match status" value="1"/>
</dbReference>
<dbReference type="SUPFAM" id="SSF46992">
    <property type="entry name" value="Ribosomal protein S20"/>
    <property type="match status" value="1"/>
</dbReference>
<sequence length="88" mass="9496">MANIKSQIKRNKTNEKARLRNKAVKSSLKTAIRKAREAAAAGDVEKATEYQRAAARQLDKAVSKGVIHKNQAANKKSALASKVAPLKG</sequence>
<name>RS20_STRAW</name>
<organism>
    <name type="scientific">Streptomyces avermitilis (strain ATCC 31267 / DSM 46492 / JCM 5070 / NBRC 14893 / NCIMB 12804 / NRRL 8165 / MA-4680)</name>
    <dbReference type="NCBI Taxonomy" id="227882"/>
    <lineage>
        <taxon>Bacteria</taxon>
        <taxon>Bacillati</taxon>
        <taxon>Actinomycetota</taxon>
        <taxon>Actinomycetes</taxon>
        <taxon>Kitasatosporales</taxon>
        <taxon>Streptomycetaceae</taxon>
        <taxon>Streptomyces</taxon>
    </lineage>
</organism>
<feature type="chain" id="PRO_0000168032" description="Small ribosomal subunit protein bS20">
    <location>
        <begin position="1"/>
        <end position="88"/>
    </location>
</feature>
<feature type="region of interest" description="Disordered" evidence="2">
    <location>
        <begin position="1"/>
        <end position="28"/>
    </location>
</feature>
<comment type="function">
    <text evidence="1">Binds directly to 16S ribosomal RNA.</text>
</comment>
<comment type="similarity">
    <text evidence="1">Belongs to the bacterial ribosomal protein bS20 family.</text>
</comment>
<protein>
    <recommendedName>
        <fullName evidence="1">Small ribosomal subunit protein bS20</fullName>
    </recommendedName>
    <alternativeName>
        <fullName evidence="3">30S ribosomal protein S20</fullName>
    </alternativeName>
</protein>
<accession>Q82BZ4</accession>
<evidence type="ECO:0000255" key="1">
    <source>
        <dbReference type="HAMAP-Rule" id="MF_00500"/>
    </source>
</evidence>
<evidence type="ECO:0000256" key="2">
    <source>
        <dbReference type="SAM" id="MobiDB-lite"/>
    </source>
</evidence>
<evidence type="ECO:0000305" key="3"/>
<reference key="1">
    <citation type="journal article" date="2001" name="Proc. Natl. Acad. Sci. U.S.A.">
        <title>Genome sequence of an industrial microorganism Streptomyces avermitilis: deducing the ability of producing secondary metabolites.</title>
        <authorList>
            <person name="Omura S."/>
            <person name="Ikeda H."/>
            <person name="Ishikawa J."/>
            <person name="Hanamoto A."/>
            <person name="Takahashi C."/>
            <person name="Shinose M."/>
            <person name="Takahashi Y."/>
            <person name="Horikawa H."/>
            <person name="Nakazawa H."/>
            <person name="Osonoe T."/>
            <person name="Kikuchi H."/>
            <person name="Shiba T."/>
            <person name="Sakaki Y."/>
            <person name="Hattori M."/>
        </authorList>
    </citation>
    <scope>NUCLEOTIDE SEQUENCE [LARGE SCALE GENOMIC DNA]</scope>
    <source>
        <strain>ATCC 31267 / DSM 46492 / JCM 5070 / NBRC 14893 / NCIMB 12804 / NRRL 8165 / MA-4680</strain>
    </source>
</reference>
<reference key="2">
    <citation type="journal article" date="2003" name="Nat. Biotechnol.">
        <title>Complete genome sequence and comparative analysis of the industrial microorganism Streptomyces avermitilis.</title>
        <authorList>
            <person name="Ikeda H."/>
            <person name="Ishikawa J."/>
            <person name="Hanamoto A."/>
            <person name="Shinose M."/>
            <person name="Kikuchi H."/>
            <person name="Shiba T."/>
            <person name="Sakaki Y."/>
            <person name="Hattori M."/>
            <person name="Omura S."/>
        </authorList>
    </citation>
    <scope>NUCLEOTIDE SEQUENCE [LARGE SCALE GENOMIC DNA]</scope>
    <source>
        <strain>ATCC 31267 / DSM 46492 / JCM 5070 / NBRC 14893 / NCIMB 12804 / NRRL 8165 / MA-4680</strain>
    </source>
</reference>
<gene>
    <name evidence="1" type="primary">rpsT</name>
    <name type="ordered locus">SAV_5560</name>
</gene>
<keyword id="KW-1185">Reference proteome</keyword>
<keyword id="KW-0687">Ribonucleoprotein</keyword>
<keyword id="KW-0689">Ribosomal protein</keyword>
<keyword id="KW-0694">RNA-binding</keyword>
<keyword id="KW-0699">rRNA-binding</keyword>